<comment type="function">
    <text evidence="1">Involved in the regulation of gene expression during fruit ripening, by stress factors and by components of stress signal transduction pathways. Transcription factor that binds to the GCC-box pathogenesis-related promoter element. Probably acts as a transcriptional activator and may be involved in disease resistance pathways (By similarity).</text>
</comment>
<comment type="subcellular location">
    <subcellularLocation>
        <location evidence="5">Nucleus</location>
    </subcellularLocation>
</comment>
<comment type="tissue specificity">
    <text evidence="4">Present in stems.</text>
</comment>
<comment type="induction">
    <text evidence="4">Strong induction by ethylene and by wounding.</text>
</comment>
<comment type="domain">
    <text evidence="1">The AP2/ERF domain binds specifically to the 5'-GCCGCC-3' motif. The affinity of this binding is higher if the seventh amino-acid of this domain is basic (By similarity).</text>
</comment>
<comment type="similarity">
    <text evidence="5">Belongs to the ethylene-response factor family. Class 1 subfamily.</text>
</comment>
<name>ERF1_SOLLC</name>
<accession>Q84XB3</accession>
<reference key="1">
    <citation type="journal article" date="2003" name="FEBS Lett.">
        <title>New members of the tomato ERF family show specific expression pattern and diverse DNA-binding capacity to the GCC box element.</title>
        <authorList>
            <person name="Tournier B."/>
            <person name="Sanchez-Ballesta M.T."/>
            <person name="Jones B."/>
            <person name="Pesquet E."/>
            <person name="Regad F."/>
            <person name="Latche A."/>
            <person name="Pech J.-C."/>
            <person name="Bouzayen M."/>
        </authorList>
    </citation>
    <scope>NUCLEOTIDE SEQUENCE [MRNA]</scope>
    <scope>TISSUE SPECIFICITY</scope>
    <scope>INDUCTION</scope>
    <scope>DOMAIN</scope>
    <source>
        <strain>cv. MicroTom</strain>
    </source>
</reference>
<feature type="chain" id="PRO_0000112544" description="Ethylene-responsive transcription factor 1">
    <location>
        <begin position="1"/>
        <end position="244"/>
    </location>
</feature>
<feature type="DNA-binding region" description="AP2/ERF" evidence="2">
    <location>
        <begin position="106"/>
        <end position="164"/>
    </location>
</feature>
<feature type="region of interest" description="Disordered" evidence="3">
    <location>
        <begin position="186"/>
        <end position="214"/>
    </location>
</feature>
<feature type="compositionally biased region" description="Low complexity" evidence="3">
    <location>
        <begin position="186"/>
        <end position="198"/>
    </location>
</feature>
<sequence length="244" mass="27085">MYQLPTSTELTFFPAEFPVYCRSSSFSSLMPCLTESWGDLPLKVNDSEDMVIYGFLQDAFSIGWTPSNLTSEEVKLEPREEIEPAMSTSVSPPTVAPAALQPKGRHYRGVRQRPWGKFAAEIRDPAKNGARVWLGTYESAEEAALAYGKAAFRMRGTKALLNFPHRIGLNEPEPVRVTVKRRLSESASSSVSSASESGSPKRRRKGVAAKQAELEVESRGPNVMKVGCQMFQLASSYWLVKIWS</sequence>
<evidence type="ECO:0000250" key="1"/>
<evidence type="ECO:0000255" key="2">
    <source>
        <dbReference type="PROSITE-ProRule" id="PRU00366"/>
    </source>
</evidence>
<evidence type="ECO:0000256" key="3">
    <source>
        <dbReference type="SAM" id="MobiDB-lite"/>
    </source>
</evidence>
<evidence type="ECO:0000269" key="4">
    <source>
    </source>
</evidence>
<evidence type="ECO:0000305" key="5"/>
<gene>
    <name type="primary">ERF1</name>
    <name type="synonym">ERF-1</name>
</gene>
<protein>
    <recommendedName>
        <fullName>Ethylene-responsive transcription factor 1</fullName>
        <shortName>LeERF1</shortName>
    </recommendedName>
    <alternativeName>
        <fullName>ERF1-like protein</fullName>
    </alternativeName>
    <alternativeName>
        <fullName>Ethylene-responsive element-binding factor 1</fullName>
        <shortName>EREBP-1</shortName>
    </alternativeName>
</protein>
<organism>
    <name type="scientific">Solanum lycopersicum</name>
    <name type="common">Tomato</name>
    <name type="synonym">Lycopersicon esculentum</name>
    <dbReference type="NCBI Taxonomy" id="4081"/>
    <lineage>
        <taxon>Eukaryota</taxon>
        <taxon>Viridiplantae</taxon>
        <taxon>Streptophyta</taxon>
        <taxon>Embryophyta</taxon>
        <taxon>Tracheophyta</taxon>
        <taxon>Spermatophyta</taxon>
        <taxon>Magnoliopsida</taxon>
        <taxon>eudicotyledons</taxon>
        <taxon>Gunneridae</taxon>
        <taxon>Pentapetalae</taxon>
        <taxon>asterids</taxon>
        <taxon>lamiids</taxon>
        <taxon>Solanales</taxon>
        <taxon>Solanaceae</taxon>
        <taxon>Solanoideae</taxon>
        <taxon>Solaneae</taxon>
        <taxon>Solanum</taxon>
        <taxon>Solanum subgen. Lycopersicon</taxon>
    </lineage>
</organism>
<proteinExistence type="evidence at transcript level"/>
<dbReference type="EMBL" id="AY192367">
    <property type="protein sequence ID" value="AAO34703.1"/>
    <property type="molecule type" value="mRNA"/>
</dbReference>
<dbReference type="SMR" id="Q84XB3"/>
<dbReference type="FunCoup" id="Q84XB3">
    <property type="interactions" value="571"/>
</dbReference>
<dbReference type="STRING" id="4081.Q84XB3"/>
<dbReference type="PaxDb" id="4081-Solyc03g093610.1.1"/>
<dbReference type="eggNOG" id="ENOG502QRIC">
    <property type="taxonomic scope" value="Eukaryota"/>
</dbReference>
<dbReference type="InParanoid" id="Q84XB3"/>
<dbReference type="Proteomes" id="UP000004994">
    <property type="component" value="Unplaced"/>
</dbReference>
<dbReference type="ExpressionAtlas" id="Q84XB3">
    <property type="expression patterns" value="baseline and differential"/>
</dbReference>
<dbReference type="GO" id="GO:0005634">
    <property type="term" value="C:nucleus"/>
    <property type="evidence" value="ECO:0007669"/>
    <property type="project" value="UniProtKB-SubCell"/>
</dbReference>
<dbReference type="GO" id="GO:0003677">
    <property type="term" value="F:DNA binding"/>
    <property type="evidence" value="ECO:0007669"/>
    <property type="project" value="UniProtKB-KW"/>
</dbReference>
<dbReference type="GO" id="GO:0003700">
    <property type="term" value="F:DNA-binding transcription factor activity"/>
    <property type="evidence" value="ECO:0007669"/>
    <property type="project" value="InterPro"/>
</dbReference>
<dbReference type="GO" id="GO:0006952">
    <property type="term" value="P:defense response"/>
    <property type="evidence" value="ECO:0007669"/>
    <property type="project" value="UniProtKB-KW"/>
</dbReference>
<dbReference type="GO" id="GO:0009873">
    <property type="term" value="P:ethylene-activated signaling pathway"/>
    <property type="evidence" value="ECO:0007669"/>
    <property type="project" value="UniProtKB-KW"/>
</dbReference>
<dbReference type="GO" id="GO:0009835">
    <property type="term" value="P:fruit ripening"/>
    <property type="evidence" value="ECO:0007669"/>
    <property type="project" value="UniProtKB-KW"/>
</dbReference>
<dbReference type="CDD" id="cd00018">
    <property type="entry name" value="AP2"/>
    <property type="match status" value="1"/>
</dbReference>
<dbReference type="FunFam" id="3.30.730.10:FF:000001">
    <property type="entry name" value="Ethylene-responsive transcription factor 2"/>
    <property type="match status" value="1"/>
</dbReference>
<dbReference type="Gene3D" id="3.30.730.10">
    <property type="entry name" value="AP2/ERF domain"/>
    <property type="match status" value="1"/>
</dbReference>
<dbReference type="InterPro" id="IPR001471">
    <property type="entry name" value="AP2/ERF_dom"/>
</dbReference>
<dbReference type="InterPro" id="IPR036955">
    <property type="entry name" value="AP2/ERF_dom_sf"/>
</dbReference>
<dbReference type="InterPro" id="IPR016177">
    <property type="entry name" value="DNA-bd_dom_sf"/>
</dbReference>
<dbReference type="InterPro" id="IPR044808">
    <property type="entry name" value="ERF_plant"/>
</dbReference>
<dbReference type="PANTHER" id="PTHR31190">
    <property type="entry name" value="DNA-BINDING DOMAIN"/>
    <property type="match status" value="1"/>
</dbReference>
<dbReference type="PANTHER" id="PTHR31190:SF495">
    <property type="entry name" value="ETHYLENE-RESPONSIVE TRANSCRIPTION FACTOR 1"/>
    <property type="match status" value="1"/>
</dbReference>
<dbReference type="Pfam" id="PF00847">
    <property type="entry name" value="AP2"/>
    <property type="match status" value="1"/>
</dbReference>
<dbReference type="PRINTS" id="PR00367">
    <property type="entry name" value="ETHRSPELEMNT"/>
</dbReference>
<dbReference type="SMART" id="SM00380">
    <property type="entry name" value="AP2"/>
    <property type="match status" value="1"/>
</dbReference>
<dbReference type="SUPFAM" id="SSF54171">
    <property type="entry name" value="DNA-binding domain"/>
    <property type="match status" value="1"/>
</dbReference>
<dbReference type="PROSITE" id="PS51032">
    <property type="entry name" value="AP2_ERF"/>
    <property type="match status" value="1"/>
</dbReference>
<keyword id="KW-0010">Activator</keyword>
<keyword id="KW-0238">DNA-binding</keyword>
<keyword id="KW-0936">Ethylene signaling pathway</keyword>
<keyword id="KW-0292">Fruit ripening</keyword>
<keyword id="KW-0539">Nucleus</keyword>
<keyword id="KW-0611">Plant defense</keyword>
<keyword id="KW-1185">Reference proteome</keyword>
<keyword id="KW-0804">Transcription</keyword>
<keyword id="KW-0805">Transcription regulation</keyword>